<gene>
    <name type="primary">C1QBP</name>
</gene>
<accession>Q3T0B6</accession>
<reference key="1">
    <citation type="submission" date="2005-08" db="EMBL/GenBank/DDBJ databases">
        <authorList>
            <consortium name="NIH - Mammalian Gene Collection (MGC) project"/>
        </authorList>
    </citation>
    <scope>NUCLEOTIDE SEQUENCE [LARGE SCALE MRNA]</scope>
    <source>
        <strain>Crossbred X Angus</strain>
        <tissue>Ileum</tissue>
    </source>
</reference>
<proteinExistence type="evidence at transcript level"/>
<sequence>MFQLLRCVPRVLGTAVAGLRAAAPSLPRLQPASRPCARPFGLLSVRARSVQLPGLLKPRGPCACGCGCSGLHTEGDKAFVDFLSDEIKEEKKIQKYKSLPKMSGGWELEVNGTEAKLVRKVAGEKITVTFNINNSIPPAFGGEEEEPSQGQKAEEQEPELTSTPNFVVEVTKDGSSKALVLDCHYPEDEIGQEDDQSDIFSIKEVSFQATGESDWKDTNYTLNTDSLDWGLYDHLMDFLADRGVDNTFADELVELSTALEHQEYISFLEDLKGFVKSK</sequence>
<evidence type="ECO:0000250" key="1"/>
<evidence type="ECO:0000250" key="2">
    <source>
        <dbReference type="UniProtKB" id="O35658"/>
    </source>
</evidence>
<evidence type="ECO:0000250" key="3">
    <source>
        <dbReference type="UniProtKB" id="O35796"/>
    </source>
</evidence>
<evidence type="ECO:0000250" key="4">
    <source>
        <dbReference type="UniProtKB" id="Q07021"/>
    </source>
</evidence>
<evidence type="ECO:0000256" key="5">
    <source>
        <dbReference type="SAM" id="MobiDB-lite"/>
    </source>
</evidence>
<evidence type="ECO:0000305" key="6"/>
<organism>
    <name type="scientific">Bos taurus</name>
    <name type="common">Bovine</name>
    <dbReference type="NCBI Taxonomy" id="9913"/>
    <lineage>
        <taxon>Eukaryota</taxon>
        <taxon>Metazoa</taxon>
        <taxon>Chordata</taxon>
        <taxon>Craniata</taxon>
        <taxon>Vertebrata</taxon>
        <taxon>Euteleostomi</taxon>
        <taxon>Mammalia</taxon>
        <taxon>Eutheria</taxon>
        <taxon>Laurasiatheria</taxon>
        <taxon>Artiodactyla</taxon>
        <taxon>Ruminantia</taxon>
        <taxon>Pecora</taxon>
        <taxon>Bovidae</taxon>
        <taxon>Bovinae</taxon>
        <taxon>Bos</taxon>
    </lineage>
</organism>
<dbReference type="EMBL" id="BC102464">
    <property type="protein sequence ID" value="AAI02465.1"/>
    <property type="molecule type" value="mRNA"/>
</dbReference>
<dbReference type="RefSeq" id="NP_001029699.1">
    <property type="nucleotide sequence ID" value="NM_001034527.2"/>
</dbReference>
<dbReference type="SMR" id="Q3T0B6"/>
<dbReference type="FunCoup" id="Q3T0B6">
    <property type="interactions" value="1904"/>
</dbReference>
<dbReference type="STRING" id="9913.ENSBTAP00000013734"/>
<dbReference type="PaxDb" id="9913-ENSBTAP00000013734"/>
<dbReference type="PeptideAtlas" id="Q3T0B6"/>
<dbReference type="Ensembl" id="ENSBTAT00000013734.5">
    <property type="protein sequence ID" value="ENSBTAP00000013734.4"/>
    <property type="gene ID" value="ENSBTAG00000012739.5"/>
</dbReference>
<dbReference type="GeneID" id="518321"/>
<dbReference type="KEGG" id="bta:518321"/>
<dbReference type="CTD" id="708"/>
<dbReference type="VEuPathDB" id="HostDB:ENSBTAG00000012739"/>
<dbReference type="VGNC" id="VGNC:26618">
    <property type="gene designation" value="C1QBP"/>
</dbReference>
<dbReference type="eggNOG" id="KOG4024">
    <property type="taxonomic scope" value="Eukaryota"/>
</dbReference>
<dbReference type="GeneTree" id="ENSGT00390000018406"/>
<dbReference type="HOGENOM" id="CLU_083914_0_0_1"/>
<dbReference type="InParanoid" id="Q3T0B6"/>
<dbReference type="OMA" id="YEHTAYV"/>
<dbReference type="OrthoDB" id="278212at2759"/>
<dbReference type="TreeFam" id="TF315160"/>
<dbReference type="Reactome" id="R-BTA-140837">
    <property type="pathway name" value="Intrinsic Pathway of Fibrin Clot Formation"/>
</dbReference>
<dbReference type="Reactome" id="R-BTA-8980692">
    <property type="pathway name" value="RHOA GTPase cycle"/>
</dbReference>
<dbReference type="Reactome" id="R-BTA-9013106">
    <property type="pathway name" value="RHOC GTPase cycle"/>
</dbReference>
<dbReference type="Proteomes" id="UP000009136">
    <property type="component" value="Chromosome 19"/>
</dbReference>
<dbReference type="Bgee" id="ENSBTAG00000012739">
    <property type="expression patterns" value="Expressed in oocyte and 106 other cell types or tissues"/>
</dbReference>
<dbReference type="GO" id="GO:0009986">
    <property type="term" value="C:cell surface"/>
    <property type="evidence" value="ECO:0000318"/>
    <property type="project" value="GO_Central"/>
</dbReference>
<dbReference type="GO" id="GO:0005737">
    <property type="term" value="C:cytoplasm"/>
    <property type="evidence" value="ECO:0000250"/>
    <property type="project" value="UniProtKB"/>
</dbReference>
<dbReference type="GO" id="GO:0005829">
    <property type="term" value="C:cytosol"/>
    <property type="evidence" value="ECO:0007669"/>
    <property type="project" value="Ensembl"/>
</dbReference>
<dbReference type="GO" id="GO:0005576">
    <property type="term" value="C:extracellular region"/>
    <property type="evidence" value="ECO:0007669"/>
    <property type="project" value="UniProtKB-SubCell"/>
</dbReference>
<dbReference type="GO" id="GO:0005759">
    <property type="term" value="C:mitochondrial matrix"/>
    <property type="evidence" value="ECO:0007669"/>
    <property type="project" value="UniProtKB-SubCell"/>
</dbReference>
<dbReference type="GO" id="GO:0005730">
    <property type="term" value="C:nucleolus"/>
    <property type="evidence" value="ECO:0007669"/>
    <property type="project" value="UniProtKB-SubCell"/>
</dbReference>
<dbReference type="GO" id="GO:0005634">
    <property type="term" value="C:nucleus"/>
    <property type="evidence" value="ECO:0000250"/>
    <property type="project" value="UniProtKB"/>
</dbReference>
<dbReference type="GO" id="GO:0005886">
    <property type="term" value="C:plasma membrane"/>
    <property type="evidence" value="ECO:0000318"/>
    <property type="project" value="GO_Central"/>
</dbReference>
<dbReference type="GO" id="GO:0032991">
    <property type="term" value="C:protein-containing complex"/>
    <property type="evidence" value="ECO:0000314"/>
    <property type="project" value="AgBase"/>
</dbReference>
<dbReference type="GO" id="GO:0031690">
    <property type="term" value="F:adrenergic receptor binding"/>
    <property type="evidence" value="ECO:0000250"/>
    <property type="project" value="UniProtKB"/>
</dbReference>
<dbReference type="GO" id="GO:0062153">
    <property type="term" value="F:C5-methylcytidine-containing RNA reader activity"/>
    <property type="evidence" value="ECO:0007669"/>
    <property type="project" value="Ensembl"/>
</dbReference>
<dbReference type="GO" id="GO:0001849">
    <property type="term" value="F:complement component C1q complex binding"/>
    <property type="evidence" value="ECO:0000250"/>
    <property type="project" value="UniProtKB"/>
</dbReference>
<dbReference type="GO" id="GO:0060703">
    <property type="term" value="F:deoxyribonuclease inhibitor activity"/>
    <property type="evidence" value="ECO:0007669"/>
    <property type="project" value="Ensembl"/>
</dbReference>
<dbReference type="GO" id="GO:0004857">
    <property type="term" value="F:enzyme inhibitor activity"/>
    <property type="evidence" value="ECO:0000250"/>
    <property type="project" value="UniProtKB"/>
</dbReference>
<dbReference type="GO" id="GO:0005540">
    <property type="term" value="F:hyaluronic acid binding"/>
    <property type="evidence" value="ECO:0000250"/>
    <property type="project" value="UniProtKB"/>
</dbReference>
<dbReference type="GO" id="GO:0030984">
    <property type="term" value="F:kininogen binding"/>
    <property type="evidence" value="ECO:0000250"/>
    <property type="project" value="UniProtKB"/>
</dbReference>
<dbReference type="GO" id="GO:0097177">
    <property type="term" value="F:mitochondrial ribosome binding"/>
    <property type="evidence" value="ECO:0000250"/>
    <property type="project" value="UniProtKB"/>
</dbReference>
<dbReference type="GO" id="GO:0003729">
    <property type="term" value="F:mRNA binding"/>
    <property type="evidence" value="ECO:0000250"/>
    <property type="project" value="UniProtKB"/>
</dbReference>
<dbReference type="GO" id="GO:0003714">
    <property type="term" value="F:transcription corepressor activity"/>
    <property type="evidence" value="ECO:0000250"/>
    <property type="project" value="UniProtKB"/>
</dbReference>
<dbReference type="GO" id="GO:0006915">
    <property type="term" value="P:apoptotic process"/>
    <property type="evidence" value="ECO:0007669"/>
    <property type="project" value="UniProtKB-KW"/>
</dbReference>
<dbReference type="GO" id="GO:0006958">
    <property type="term" value="P:complement activation, classical pathway"/>
    <property type="evidence" value="ECO:0007669"/>
    <property type="project" value="UniProtKB-KW"/>
</dbReference>
<dbReference type="GO" id="GO:0042256">
    <property type="term" value="P:cytosolic ribosome assembly"/>
    <property type="evidence" value="ECO:0000250"/>
    <property type="project" value="UniProtKB"/>
</dbReference>
<dbReference type="GO" id="GO:0006974">
    <property type="term" value="P:DNA damage response"/>
    <property type="evidence" value="ECO:0007669"/>
    <property type="project" value="UniProtKB-KW"/>
</dbReference>
<dbReference type="GO" id="GO:0045087">
    <property type="term" value="P:innate immune response"/>
    <property type="evidence" value="ECO:0007669"/>
    <property type="project" value="UniProtKB-KW"/>
</dbReference>
<dbReference type="GO" id="GO:0000957">
    <property type="term" value="P:mitochondrial RNA catabolic process"/>
    <property type="evidence" value="ECO:0007669"/>
    <property type="project" value="Ensembl"/>
</dbReference>
<dbReference type="GO" id="GO:0006397">
    <property type="term" value="P:mRNA processing"/>
    <property type="evidence" value="ECO:0007669"/>
    <property type="project" value="UniProtKB-KW"/>
</dbReference>
<dbReference type="GO" id="GO:0050687">
    <property type="term" value="P:negative regulation of defense response to virus"/>
    <property type="evidence" value="ECO:0000250"/>
    <property type="project" value="UniProtKB"/>
</dbReference>
<dbReference type="GO" id="GO:2000042">
    <property type="term" value="P:negative regulation of double-strand break repair via homologous recombination"/>
    <property type="evidence" value="ECO:0000250"/>
    <property type="project" value="UniProtKB"/>
</dbReference>
<dbReference type="GO" id="GO:0032695">
    <property type="term" value="P:negative regulation of interleukin-12 production"/>
    <property type="evidence" value="ECO:0000250"/>
    <property type="project" value="UniProtKB"/>
</dbReference>
<dbReference type="GO" id="GO:0039534">
    <property type="term" value="P:negative regulation of MDA-5 signaling pathway"/>
    <property type="evidence" value="ECO:0000250"/>
    <property type="project" value="UniProtKB"/>
</dbReference>
<dbReference type="GO" id="GO:0048025">
    <property type="term" value="P:negative regulation of mRNA splicing, via spliceosome"/>
    <property type="evidence" value="ECO:0000250"/>
    <property type="project" value="UniProtKB"/>
</dbReference>
<dbReference type="GO" id="GO:0039536">
    <property type="term" value="P:negative regulation of RIG-I signaling pathway"/>
    <property type="evidence" value="ECO:0000250"/>
    <property type="project" value="UniProtKB"/>
</dbReference>
<dbReference type="GO" id="GO:0000122">
    <property type="term" value="P:negative regulation of transcription by RNA polymerase II"/>
    <property type="evidence" value="ECO:0000250"/>
    <property type="project" value="UniProtKB"/>
</dbReference>
<dbReference type="GO" id="GO:0032689">
    <property type="term" value="P:negative regulation of type II interferon production"/>
    <property type="evidence" value="ECO:0000250"/>
    <property type="project" value="UniProtKB"/>
</dbReference>
<dbReference type="GO" id="GO:0043491">
    <property type="term" value="P:phosphatidylinositol 3-kinase/protein kinase B signal transduction"/>
    <property type="evidence" value="ECO:0000250"/>
    <property type="project" value="UniProtKB"/>
</dbReference>
<dbReference type="GO" id="GO:0043065">
    <property type="term" value="P:positive regulation of apoptotic process"/>
    <property type="evidence" value="ECO:0000250"/>
    <property type="project" value="UniProtKB"/>
</dbReference>
<dbReference type="GO" id="GO:0045785">
    <property type="term" value="P:positive regulation of cell adhesion"/>
    <property type="evidence" value="ECO:0000250"/>
    <property type="project" value="UniProtKB"/>
</dbReference>
<dbReference type="GO" id="GO:2000510">
    <property type="term" value="P:positive regulation of dendritic cell chemotaxis"/>
    <property type="evidence" value="ECO:0000250"/>
    <property type="project" value="UniProtKB"/>
</dbReference>
<dbReference type="GO" id="GO:0070131">
    <property type="term" value="P:positive regulation of mitochondrial translation"/>
    <property type="evidence" value="ECO:0000250"/>
    <property type="project" value="UniProtKB"/>
</dbReference>
<dbReference type="GO" id="GO:0090023">
    <property type="term" value="P:positive regulation of neutrophil chemotaxis"/>
    <property type="evidence" value="ECO:0000250"/>
    <property type="project" value="UniProtKB"/>
</dbReference>
<dbReference type="GO" id="GO:0051897">
    <property type="term" value="P:positive regulation of phosphatidylinositol 3-kinase/protein kinase B signal transduction"/>
    <property type="evidence" value="ECO:0000250"/>
    <property type="project" value="UniProtKB"/>
</dbReference>
<dbReference type="GO" id="GO:1900026">
    <property type="term" value="P:positive regulation of substrate adhesion-dependent cell spreading"/>
    <property type="evidence" value="ECO:0000250"/>
    <property type="project" value="UniProtKB"/>
</dbReference>
<dbReference type="GO" id="GO:1901165">
    <property type="term" value="P:positive regulation of trophoblast cell migration"/>
    <property type="evidence" value="ECO:0000250"/>
    <property type="project" value="UniProtKB"/>
</dbReference>
<dbReference type="GO" id="GO:0030449">
    <property type="term" value="P:regulation of complement activation"/>
    <property type="evidence" value="ECO:0000250"/>
    <property type="project" value="UniProtKB"/>
</dbReference>
<dbReference type="GO" id="GO:0008380">
    <property type="term" value="P:RNA splicing"/>
    <property type="evidence" value="ECO:0007669"/>
    <property type="project" value="UniProtKB-KW"/>
</dbReference>
<dbReference type="FunFam" id="3.10.280.10:FF:000001">
    <property type="entry name" value="Complement component 1 Q subcomponent-binding protein, mitochondrial"/>
    <property type="match status" value="1"/>
</dbReference>
<dbReference type="Gene3D" id="3.10.280.10">
    <property type="entry name" value="Mitochondrial glycoprotein"/>
    <property type="match status" value="1"/>
</dbReference>
<dbReference type="InterPro" id="IPR003428">
    <property type="entry name" value="MAM33"/>
</dbReference>
<dbReference type="InterPro" id="IPR036561">
    <property type="entry name" value="MAM33_sf"/>
</dbReference>
<dbReference type="PANTHER" id="PTHR10826">
    <property type="entry name" value="COMPLEMENT COMPONENT 1"/>
    <property type="match status" value="1"/>
</dbReference>
<dbReference type="PANTHER" id="PTHR10826:SF1">
    <property type="entry name" value="COMPLEMENT COMPONENT 1 Q SUBCOMPONENT-BINDING PROTEIN, MITOCHONDRIAL"/>
    <property type="match status" value="1"/>
</dbReference>
<dbReference type="Pfam" id="PF02330">
    <property type="entry name" value="MAM33"/>
    <property type="match status" value="1"/>
</dbReference>
<dbReference type="SUPFAM" id="SSF54529">
    <property type="entry name" value="Mitochondrial glycoprotein MAM33-like"/>
    <property type="match status" value="1"/>
</dbReference>
<comment type="function">
    <text evidence="2 4">Multifunctional and multicompartmental protein involved in inflammation and infection processes, ribosome biogenesis, protein synthesis in mitochondria, regulation of apoptosis, transcriptional regulation and pre-mRNA splicing. At the cell surface is thought to act as an endothelial receptor for plasma proteins of the complement and kallikrein-kinin cascades. Putative receptor for C1q; specifically binds to the globular 'heads' of C1q thus inhibiting C1; may perform the receptor function through a complex with C1qR/CD93. In complex with cytokeratin-1/KRT1 is a high affinity receptor for kininogen-1/HMWK. Can also bind other plasma proteins, such as coagulation factor XII leading to its autoactivation. May function to bind initially fluid kininogen-1 to the cell membrane. The secreted form may enhance both extrinsic and intrinsic coagulation pathways. It is postulated that the cell surface form requires docking with transmembrane proteins for downstream signaling which might be specific for a cell-type or response. By acting as C1q receptor is involved in chemotaxis of immature dendritic cells and neutrophils and is proposed to signal through CD209/DC-SIGN on immature dendritic cells, through integrin alpha-4/beta-1 during trophoblast invasion of the decidua, and through integrin beta-1 during endothelial cell adhesion and spreading. Signaling involved in inhibition of innate immune response is implicating the PI3K-AKT/PKB pathway. Required for protein synthesis in mitochondria (By similarity). In mitochondrial translation may be involved in formation of functional 55S mitoribosomes; the function seems to involve its RNA-binding activity. Acts as a RNA modification reader, which specifically recognizes and binds mitochondrial RNAs modified by C5-methylcytosine (m5C) in response to stress, and promotes recruitment of the mitochondrial degradosome complex, leading to their degradation (By similarity). May be involved in the nucleolar ribosome maturation process; the function may involve the exchange of FBL for RRP1 in the association with pre-ribosome particles (By similarity). Involved in regulation of RNA splicing by inhibiting the RNA-binding capacity of SRSF1 and its phosphorylation (By similarity). Is required for the nuclear translocation of splicing factor U2AF1L4 (By similarity). Involved in regulation of CDKN2A- and HRK-mediated apoptosis. Stabilizes mitochondrial CDKN2A isoform smARF. May be involved in regulation of FOXC1 transcriptional activity and NFY/CCAAT-binding factor complex-mediated transcription. May play a role in antibacterial defense as it can bind to cell surface hyaluronan and inhibit Streptococcus pneumoniae hyaluronate lyase. May be involved in modulation of the immune response; ligation by HCV core protein is resulting in suppression of interleukin-12 production in monocyte-derived dendritic cells. Involved in regulation of antiviral response by inhibiting RIGI- and IFIH1-mediated signaling pathways probably involving its association with MAVS after viral infection. Acts as a regulator of DNA repair via homologous recombination by inhibiting the activity of MRE11: interacts with unphosphorylated MRE11 and RAD50 in absence of DNA damage, preventing formation and activity of the MRN complex. Following DNA damage, dissociates from phosphorylated MRE11, allowing formation of the MRN complex (By similarity).</text>
</comment>
<comment type="subunit">
    <text evidence="2 3 4">Homotrimer; three monomers form a donut-shaped structure with an unusually asymmetric charge distribution on the surface. Interacts with CDK13, HRK, VTN, NFYB, ADRA1B, FOXC1, DDX21, DDX50, NCL, SRSF1 and SRSF9. Interacts with CD93; the association may represent a cell surface C1q receptor. Interacts with KRT1; the association represents a cell surface kininogen receptor. Interacts with CD209; the interaction is indicative for a C1q:C1QBP:CD209 signaling complex. Interacts with FBL and RRP1; the respective interactions with C1QBP are competitive. Probably associates with the mitoribosome. Interacts with MAVS; the interaction occurs upon viral transfection. Interacts with PPIF. Interacts with U2AF1L4. Interacts with PLEKHN1. Interacts with VGF-derived peptide TLQP-21 (By similarity). Interacts with MRE11 and RAD50; forming the MRC (MRE11-RAD50-C1QBP) complex that inhibits the activity of MRE11 (By similarity).</text>
</comment>
<comment type="subcellular location">
    <subcellularLocation>
        <location evidence="4">Mitochondrion matrix</location>
    </subcellularLocation>
    <subcellularLocation>
        <location evidence="4">Nucleus</location>
    </subcellularLocation>
    <subcellularLocation>
        <location evidence="4">Cell membrane</location>
        <topology evidence="4">Peripheral membrane protein</topology>
        <orientation evidence="4">Extracellular side</orientation>
    </subcellularLocation>
    <subcellularLocation>
        <location evidence="4">Secreted</location>
    </subcellularLocation>
    <subcellularLocation>
        <location evidence="4">Cytoplasm</location>
    </subcellularLocation>
    <subcellularLocation>
        <location evidence="4">Nucleus</location>
        <location evidence="4">Nucleolus</location>
    </subcellularLocation>
    <text evidence="4">Seems to be predominantly localized to mitochondria. Secreted by activated lymphocytes.</text>
</comment>
<comment type="similarity">
    <text evidence="6">Belongs to the MAM33 family.</text>
</comment>
<feature type="transit peptide" description="Mitochondrion" evidence="1">
    <location>
        <begin position="1"/>
        <end position="70"/>
    </location>
</feature>
<feature type="chain" id="PRO_0000238676" description="Complement component 1 Q subcomponent-binding protein, mitochondrial">
    <location>
        <begin position="71"/>
        <end position="278"/>
    </location>
</feature>
<feature type="region of interest" description="C1q binding" evidence="1">
    <location>
        <begin position="73"/>
        <end position="90"/>
    </location>
</feature>
<feature type="region of interest" description="Disordered" evidence="5">
    <location>
        <begin position="136"/>
        <end position="164"/>
    </location>
</feature>
<feature type="region of interest" description="Interaction with MAVS" evidence="1">
    <location>
        <begin position="166"/>
        <end position="209"/>
    </location>
</feature>
<feature type="modified residue" description="Phosphoserine" evidence="4">
    <location>
        <position position="84"/>
    </location>
</feature>
<feature type="modified residue" description="N6-acetyllysine" evidence="4">
    <location>
        <position position="88"/>
    </location>
</feature>
<feature type="modified residue" description="N6-acetyllysine" evidence="2">
    <location>
        <position position="91"/>
    </location>
</feature>
<feature type="modified residue" description="Phosphotyrosine" evidence="4">
    <location>
        <position position="185"/>
    </location>
</feature>
<feature type="modified residue" description="Phosphoserine" evidence="4">
    <location>
        <position position="197"/>
    </location>
</feature>
<feature type="modified residue" description="Phosphoserine" evidence="4">
    <location>
        <position position="201"/>
    </location>
</feature>
<feature type="modified residue" description="Phosphothreonine" evidence="4">
    <location>
        <position position="210"/>
    </location>
</feature>
<protein>
    <recommendedName>
        <fullName>Complement component 1 Q subcomponent-binding protein, mitochondrial</fullName>
    </recommendedName>
</protein>
<name>C1QBP_BOVIN</name>
<keyword id="KW-0007">Acetylation</keyword>
<keyword id="KW-1064">Adaptive immunity</keyword>
<keyword id="KW-0053">Apoptosis</keyword>
<keyword id="KW-1003">Cell membrane</keyword>
<keyword id="KW-0180">Complement pathway</keyword>
<keyword id="KW-0963">Cytoplasm</keyword>
<keyword id="KW-0227">DNA damage</keyword>
<keyword id="KW-0391">Immunity</keyword>
<keyword id="KW-0399">Innate immunity</keyword>
<keyword id="KW-0472">Membrane</keyword>
<keyword id="KW-0496">Mitochondrion</keyword>
<keyword id="KW-0507">mRNA processing</keyword>
<keyword id="KW-0508">mRNA splicing</keyword>
<keyword id="KW-0539">Nucleus</keyword>
<keyword id="KW-0597">Phosphoprotein</keyword>
<keyword id="KW-1185">Reference proteome</keyword>
<keyword id="KW-0690">Ribosome biogenesis</keyword>
<keyword id="KW-0964">Secreted</keyword>
<keyword id="KW-0804">Transcription</keyword>
<keyword id="KW-0805">Transcription regulation</keyword>
<keyword id="KW-0809">Transit peptide</keyword>